<reference key="1">
    <citation type="submission" date="2003-08" db="EMBL/GenBank/DDBJ databases">
        <authorList>
            <consortium name="NIH - Zebrafish Gene Collection (ZGC) project"/>
        </authorList>
    </citation>
    <scope>NUCLEOTIDE SEQUENCE [LARGE SCALE MRNA]</scope>
</reference>
<feature type="chain" id="PRO_0000207505" description="7-dehydrocholesterol reductase">
    <location>
        <begin position="1"/>
        <end position="478"/>
    </location>
</feature>
<feature type="transmembrane region" description="Helical" evidence="4">
    <location>
        <begin position="43"/>
        <end position="63"/>
    </location>
</feature>
<feature type="transmembrane region" description="Helical" evidence="4">
    <location>
        <begin position="97"/>
        <end position="117"/>
    </location>
</feature>
<feature type="transmembrane region" description="Helical" evidence="4">
    <location>
        <begin position="180"/>
        <end position="200"/>
    </location>
</feature>
<feature type="transmembrane region" description="Helical" evidence="4">
    <location>
        <begin position="269"/>
        <end position="289"/>
    </location>
</feature>
<feature type="transmembrane region" description="Helical" evidence="4">
    <location>
        <begin position="309"/>
        <end position="329"/>
    </location>
</feature>
<feature type="transmembrane region" description="Helical" evidence="4">
    <location>
        <begin position="333"/>
        <end position="353"/>
    </location>
</feature>
<feature type="transmembrane region" description="Helical" evidence="4">
    <location>
        <begin position="424"/>
        <end position="444"/>
    </location>
</feature>
<feature type="region of interest" description="Disordered" evidence="5">
    <location>
        <begin position="1"/>
        <end position="28"/>
    </location>
</feature>
<feature type="binding site" evidence="1">
    <location>
        <position position="361"/>
    </location>
    <ligand>
        <name>NADP(+)</name>
        <dbReference type="ChEBI" id="CHEBI:58349"/>
    </ligand>
</feature>
<feature type="binding site" evidence="1">
    <location>
        <position position="365"/>
    </location>
    <ligand>
        <name>NADP(+)</name>
        <dbReference type="ChEBI" id="CHEBI:58349"/>
    </ligand>
</feature>
<feature type="binding site" evidence="1">
    <location>
        <position position="398"/>
    </location>
    <ligand>
        <name>NADP(+)</name>
        <dbReference type="ChEBI" id="CHEBI:58349"/>
    </ligand>
</feature>
<feature type="binding site" evidence="1">
    <location>
        <position position="403"/>
    </location>
    <ligand>
        <name>NADP(+)</name>
        <dbReference type="ChEBI" id="CHEBI:58349"/>
    </ligand>
</feature>
<feature type="binding site" evidence="1">
    <location>
        <begin position="410"/>
        <end position="411"/>
    </location>
    <ligand>
        <name>NADP(+)</name>
        <dbReference type="ChEBI" id="CHEBI:58349"/>
    </ligand>
</feature>
<feature type="binding site" evidence="1">
    <location>
        <position position="450"/>
    </location>
    <ligand>
        <name>NADP(+)</name>
        <dbReference type="ChEBI" id="CHEBI:58349"/>
    </ligand>
</feature>
<feature type="binding site" evidence="1">
    <location>
        <begin position="454"/>
        <end position="458"/>
    </location>
    <ligand>
        <name>NADP(+)</name>
        <dbReference type="ChEBI" id="CHEBI:58349"/>
    </ligand>
</feature>
<feature type="binding site" evidence="1">
    <location>
        <position position="465"/>
    </location>
    <ligand>
        <name>NADP(+)</name>
        <dbReference type="ChEBI" id="CHEBI:58349"/>
    </ligand>
</feature>
<accession>Q7SXF1</accession>
<name>DHCR7_DANRE</name>
<sequence>MMASDRVRKRHKGSANGAQTVEKEPSKEPAQWGRAWEVDWFSLSGVILLLCFAPFLVSFFIMACDQYQCSISHPLLDLYNGDATLFTIWNRAPSFTWAAAKIYAIWVTFQVVLYMCVPDFLHKILPGYVGGVQDGARTPAGLINKYEVNGLQCWLITHVLWVLNAQHFHWFSPTIIIDNWIPLLWCTNILGYAVSTFAFIKAYLFPTNPEDCKFTGNMFYNYMMGIEFNPRIGKWFDFKLFFNGRPGIVAWTLINLSYAAKQQELYGYVTNSMILVNVLQAVYVVDFFWNEAWYLKTIDICHDHFGWYLGWGDCVWLPFLYTLQGLYLVYNPIQLSTPHAAGVLILGLVGYYIFRVTNHQKDLFRRTEGNCSIWGKKPTFIECSYQSADGAIHKSKLMTSGFWGVARHMNYTGDLMGSLAYCLACGGNHLLPYFYIIYMTILLVHRCIRDEHRCSNKYGKDWERYTAAVSYRLLPNIF</sequence>
<keyword id="KW-0152">Cholesterol biosynthesis</keyword>
<keyword id="KW-0153">Cholesterol metabolism</keyword>
<keyword id="KW-0256">Endoplasmic reticulum</keyword>
<keyword id="KW-0444">Lipid biosynthesis</keyword>
<keyword id="KW-0443">Lipid metabolism</keyword>
<keyword id="KW-0472">Membrane</keyword>
<keyword id="KW-0521">NADP</keyword>
<keyword id="KW-0560">Oxidoreductase</keyword>
<keyword id="KW-1185">Reference proteome</keyword>
<keyword id="KW-0752">Steroid biosynthesis</keyword>
<keyword id="KW-0753">Steroid metabolism</keyword>
<keyword id="KW-0756">Sterol biosynthesis</keyword>
<keyword id="KW-1207">Sterol metabolism</keyword>
<keyword id="KW-0812">Transmembrane</keyword>
<keyword id="KW-1133">Transmembrane helix</keyword>
<comment type="function">
    <text evidence="2 3">Catalyzes the last step of the cholesterol synthesis pathway, which transforms cholesta-5,7-dien-3beta-ol (7-dehydrocholesterol,7-DHC) into cholesterol by reducing the C7-C8 double bond of its sterol core (By similarity). Can also metabolize cholesta-5,7,24-trien-3beta-ol (7-dehydrodemosterol, 7-DHD) to desmosterol, which is then metabolized by the Delta(24)-sterol reductase (DHCR24) to cholesterol (By similarity). Modulates ferroptosis (a form of regulated cell death driven by iron-dependent lipid peroxidation) through the metabolic breakdown of the anti-ferroptotic metabolites 7-DHC and 7-DHD which, when accumulated, divert the propagation of peroxyl radical-mediated damage from phospholipid components to its sterol core, protecting plasma and mitochondrial membranes from phospholipid autoxidation (By similarity).</text>
</comment>
<comment type="catalytic activity">
    <reaction evidence="3">
        <text>cholesterol + NADP(+) = 7-dehydrocholesterol + NADPH + H(+)</text>
        <dbReference type="Rhea" id="RHEA:23984"/>
        <dbReference type="ChEBI" id="CHEBI:15378"/>
        <dbReference type="ChEBI" id="CHEBI:16113"/>
        <dbReference type="ChEBI" id="CHEBI:17759"/>
        <dbReference type="ChEBI" id="CHEBI:57783"/>
        <dbReference type="ChEBI" id="CHEBI:58349"/>
        <dbReference type="EC" id="1.3.1.21"/>
    </reaction>
    <physiologicalReaction direction="right-to-left" evidence="3">
        <dbReference type="Rhea" id="RHEA:23986"/>
    </physiologicalReaction>
</comment>
<comment type="catalytic activity">
    <reaction evidence="2">
        <text>7-dehydrodesmosterol + NADPH + H(+) = desmosterol + NADP(+)</text>
        <dbReference type="Rhea" id="RHEA:46740"/>
        <dbReference type="ChEBI" id="CHEBI:15378"/>
        <dbReference type="ChEBI" id="CHEBI:17737"/>
        <dbReference type="ChEBI" id="CHEBI:27910"/>
        <dbReference type="ChEBI" id="CHEBI:57783"/>
        <dbReference type="ChEBI" id="CHEBI:58349"/>
    </reaction>
    <physiologicalReaction direction="left-to-right" evidence="2">
        <dbReference type="Rhea" id="RHEA:46741"/>
    </physiologicalReaction>
</comment>
<comment type="pathway">
    <text evidence="2">Steroid biosynthesis; cholesterol biosynthesis.</text>
</comment>
<comment type="subcellular location">
    <subcellularLocation>
        <location evidence="3">Endoplasmic reticulum membrane</location>
        <topology evidence="4">Multi-pass membrane protein</topology>
    </subcellularLocation>
</comment>
<comment type="similarity">
    <text evidence="6">Belongs to the ERG4/ERG24 family.</text>
</comment>
<protein>
    <recommendedName>
        <fullName>7-dehydrocholesterol reductase</fullName>
        <shortName>7-DHC reductase</shortName>
        <ecNumber evidence="2">1.3.1.21</ecNumber>
    </recommendedName>
    <alternativeName>
        <fullName>Sterol Delta(7)-reductase</fullName>
    </alternativeName>
</protein>
<dbReference type="EC" id="1.3.1.21" evidence="2"/>
<dbReference type="EMBL" id="BC055631">
    <property type="protein sequence ID" value="AAH55631.1"/>
    <property type="molecule type" value="mRNA"/>
</dbReference>
<dbReference type="RefSeq" id="NP_958487.1">
    <property type="nucleotide sequence ID" value="NM_201330.1"/>
</dbReference>
<dbReference type="SMR" id="Q7SXF1"/>
<dbReference type="FunCoup" id="Q7SXF1">
    <property type="interactions" value="379"/>
</dbReference>
<dbReference type="STRING" id="7955.ENSDARP00000136120"/>
<dbReference type="PaxDb" id="7955-ENSDARP00000101967"/>
<dbReference type="GeneID" id="378446"/>
<dbReference type="KEGG" id="dre:378446"/>
<dbReference type="AGR" id="ZFIN:ZDB-GENE-030912-9"/>
<dbReference type="CTD" id="1717"/>
<dbReference type="ZFIN" id="ZDB-GENE-030912-9">
    <property type="gene designation" value="dhcr7"/>
</dbReference>
<dbReference type="eggNOG" id="KOG1435">
    <property type="taxonomic scope" value="Eukaryota"/>
</dbReference>
<dbReference type="InParanoid" id="Q7SXF1"/>
<dbReference type="OrthoDB" id="5326588at2759"/>
<dbReference type="PhylomeDB" id="Q7SXF1"/>
<dbReference type="Reactome" id="R-DRE-6807047">
    <property type="pathway name" value="Cholesterol biosynthesis via desmosterol"/>
</dbReference>
<dbReference type="Reactome" id="R-DRE-6807062">
    <property type="pathway name" value="Cholesterol biosynthesis via lathosterol"/>
</dbReference>
<dbReference type="UniPathway" id="UPA00063"/>
<dbReference type="PRO" id="PR:Q7SXF1"/>
<dbReference type="Proteomes" id="UP000000437">
    <property type="component" value="Chromosome 2"/>
</dbReference>
<dbReference type="GO" id="GO:0005789">
    <property type="term" value="C:endoplasmic reticulum membrane"/>
    <property type="evidence" value="ECO:0000318"/>
    <property type="project" value="GO_Central"/>
</dbReference>
<dbReference type="GO" id="GO:0047598">
    <property type="term" value="F:7-dehydrocholesterol reductase activity"/>
    <property type="evidence" value="ECO:0000318"/>
    <property type="project" value="GO_Central"/>
</dbReference>
<dbReference type="GO" id="GO:0050661">
    <property type="term" value="F:NADP binding"/>
    <property type="evidence" value="ECO:0000250"/>
    <property type="project" value="UniProtKB"/>
</dbReference>
<dbReference type="GO" id="GO:0016628">
    <property type="term" value="F:oxidoreductase activity, acting on the CH-CH group of donors, NAD or NADP as acceptor"/>
    <property type="evidence" value="ECO:0000314"/>
    <property type="project" value="ZFIN"/>
</dbReference>
<dbReference type="GO" id="GO:0006695">
    <property type="term" value="P:cholesterol biosynthetic process"/>
    <property type="evidence" value="ECO:0000315"/>
    <property type="project" value="ZFIN"/>
</dbReference>
<dbReference type="FunFam" id="1.20.120.1630:FF:000004">
    <property type="entry name" value="7-dehydrocholesterol reductase"/>
    <property type="match status" value="1"/>
</dbReference>
<dbReference type="Gene3D" id="1.20.120.1630">
    <property type="match status" value="1"/>
</dbReference>
<dbReference type="InterPro" id="IPR001171">
    <property type="entry name" value="ERG24_DHCR-like"/>
</dbReference>
<dbReference type="InterPro" id="IPR018083">
    <property type="entry name" value="Sterol_reductase_CS"/>
</dbReference>
<dbReference type="PANTHER" id="PTHR21257:SF38">
    <property type="entry name" value="7-DEHYDROCHOLESTEROL REDUCTASE"/>
    <property type="match status" value="1"/>
</dbReference>
<dbReference type="PANTHER" id="PTHR21257">
    <property type="entry name" value="DELTA(14)-STEROL REDUCTASE"/>
    <property type="match status" value="1"/>
</dbReference>
<dbReference type="Pfam" id="PF01222">
    <property type="entry name" value="ERG4_ERG24"/>
    <property type="match status" value="1"/>
</dbReference>
<dbReference type="PROSITE" id="PS01017">
    <property type="entry name" value="STEROL_REDUCT_1"/>
    <property type="match status" value="1"/>
</dbReference>
<dbReference type="PROSITE" id="PS01018">
    <property type="entry name" value="STEROL_REDUCT_2"/>
    <property type="match status" value="1"/>
</dbReference>
<organism>
    <name type="scientific">Danio rerio</name>
    <name type="common">Zebrafish</name>
    <name type="synonym">Brachydanio rerio</name>
    <dbReference type="NCBI Taxonomy" id="7955"/>
    <lineage>
        <taxon>Eukaryota</taxon>
        <taxon>Metazoa</taxon>
        <taxon>Chordata</taxon>
        <taxon>Craniata</taxon>
        <taxon>Vertebrata</taxon>
        <taxon>Euteleostomi</taxon>
        <taxon>Actinopterygii</taxon>
        <taxon>Neopterygii</taxon>
        <taxon>Teleostei</taxon>
        <taxon>Ostariophysi</taxon>
        <taxon>Cypriniformes</taxon>
        <taxon>Danionidae</taxon>
        <taxon>Danioninae</taxon>
        <taxon>Danio</taxon>
    </lineage>
</organism>
<proteinExistence type="evidence at transcript level"/>
<gene>
    <name type="primary">dhcr7</name>
</gene>
<evidence type="ECO:0000250" key="1">
    <source>
        <dbReference type="UniProtKB" id="G4SW86"/>
    </source>
</evidence>
<evidence type="ECO:0000250" key="2">
    <source>
        <dbReference type="UniProtKB" id="O88455"/>
    </source>
</evidence>
<evidence type="ECO:0000250" key="3">
    <source>
        <dbReference type="UniProtKB" id="Q9UBM7"/>
    </source>
</evidence>
<evidence type="ECO:0000255" key="4"/>
<evidence type="ECO:0000256" key="5">
    <source>
        <dbReference type="SAM" id="MobiDB-lite"/>
    </source>
</evidence>
<evidence type="ECO:0000305" key="6"/>